<dbReference type="EC" id="3.1.-.-" evidence="1"/>
<dbReference type="EMBL" id="CP000950">
    <property type="protein sequence ID" value="ACA67137.1"/>
    <property type="molecule type" value="Genomic_DNA"/>
</dbReference>
<dbReference type="SMR" id="B1JNP5"/>
<dbReference type="KEGG" id="ypy:YPK_0836"/>
<dbReference type="PATRIC" id="fig|502800.11.peg.1461"/>
<dbReference type="GO" id="GO:0005829">
    <property type="term" value="C:cytosol"/>
    <property type="evidence" value="ECO:0007669"/>
    <property type="project" value="TreeGrafter"/>
</dbReference>
<dbReference type="GO" id="GO:0004518">
    <property type="term" value="F:nuclease activity"/>
    <property type="evidence" value="ECO:0007669"/>
    <property type="project" value="UniProtKB-KW"/>
</dbReference>
<dbReference type="GO" id="GO:0000967">
    <property type="term" value="P:rRNA 5'-end processing"/>
    <property type="evidence" value="ECO:0007669"/>
    <property type="project" value="UniProtKB-UniRule"/>
</dbReference>
<dbReference type="CDD" id="cd16964">
    <property type="entry name" value="YqgF"/>
    <property type="match status" value="1"/>
</dbReference>
<dbReference type="FunFam" id="3.30.420.140:FF:000002">
    <property type="entry name" value="Putative pre-16S rRNA nuclease"/>
    <property type="match status" value="1"/>
</dbReference>
<dbReference type="Gene3D" id="3.30.420.140">
    <property type="entry name" value="YqgF/RNase H-like domain"/>
    <property type="match status" value="1"/>
</dbReference>
<dbReference type="HAMAP" id="MF_00651">
    <property type="entry name" value="Nuclease_YqgF"/>
    <property type="match status" value="1"/>
</dbReference>
<dbReference type="InterPro" id="IPR012337">
    <property type="entry name" value="RNaseH-like_sf"/>
</dbReference>
<dbReference type="InterPro" id="IPR005227">
    <property type="entry name" value="YqgF"/>
</dbReference>
<dbReference type="InterPro" id="IPR006641">
    <property type="entry name" value="YqgF/RNaseH-like_dom"/>
</dbReference>
<dbReference type="InterPro" id="IPR037027">
    <property type="entry name" value="YqgF/RNaseH-like_dom_sf"/>
</dbReference>
<dbReference type="NCBIfam" id="TIGR00250">
    <property type="entry name" value="RNAse_H_YqgF"/>
    <property type="match status" value="1"/>
</dbReference>
<dbReference type="PANTHER" id="PTHR33317">
    <property type="entry name" value="POLYNUCLEOTIDYL TRANSFERASE, RIBONUCLEASE H-LIKE SUPERFAMILY PROTEIN"/>
    <property type="match status" value="1"/>
</dbReference>
<dbReference type="PANTHER" id="PTHR33317:SF4">
    <property type="entry name" value="POLYNUCLEOTIDYL TRANSFERASE, RIBONUCLEASE H-LIKE SUPERFAMILY PROTEIN"/>
    <property type="match status" value="1"/>
</dbReference>
<dbReference type="Pfam" id="PF03652">
    <property type="entry name" value="RuvX"/>
    <property type="match status" value="1"/>
</dbReference>
<dbReference type="SMART" id="SM00732">
    <property type="entry name" value="YqgFc"/>
    <property type="match status" value="1"/>
</dbReference>
<dbReference type="SUPFAM" id="SSF53098">
    <property type="entry name" value="Ribonuclease H-like"/>
    <property type="match status" value="1"/>
</dbReference>
<protein>
    <recommendedName>
        <fullName evidence="1">Putative pre-16S rRNA nuclease</fullName>
        <ecNumber evidence="1">3.1.-.-</ecNumber>
    </recommendedName>
</protein>
<reference key="1">
    <citation type="submission" date="2008-02" db="EMBL/GenBank/DDBJ databases">
        <title>Complete sequence of Yersinia pseudotuberculosis YPIII.</title>
        <authorList>
            <consortium name="US DOE Joint Genome Institute"/>
            <person name="Copeland A."/>
            <person name="Lucas S."/>
            <person name="Lapidus A."/>
            <person name="Glavina del Rio T."/>
            <person name="Dalin E."/>
            <person name="Tice H."/>
            <person name="Bruce D."/>
            <person name="Goodwin L."/>
            <person name="Pitluck S."/>
            <person name="Munk A.C."/>
            <person name="Brettin T."/>
            <person name="Detter J.C."/>
            <person name="Han C."/>
            <person name="Tapia R."/>
            <person name="Schmutz J."/>
            <person name="Larimer F."/>
            <person name="Land M."/>
            <person name="Hauser L."/>
            <person name="Challacombe J.F."/>
            <person name="Green L."/>
            <person name="Lindler L.E."/>
            <person name="Nikolich M.P."/>
            <person name="Richardson P."/>
        </authorList>
    </citation>
    <scope>NUCLEOTIDE SEQUENCE [LARGE SCALE GENOMIC DNA]</scope>
    <source>
        <strain>YPIII</strain>
    </source>
</reference>
<sequence length="140" mass="15316">MANRTIIAFDFGTKSIGVAIGQEVTGTARALTAFKAQDGTPDWQQVEKLLKEWQPNLVVVGLPLNMDGTEQPLTARARRFANRLHGRFGVQVALQDERLSTVEARANLFDRGGYRALDKGSVDAASAVIILESWFDEQAG</sequence>
<keyword id="KW-0963">Cytoplasm</keyword>
<keyword id="KW-0378">Hydrolase</keyword>
<keyword id="KW-0540">Nuclease</keyword>
<keyword id="KW-0690">Ribosome biogenesis</keyword>
<name>YQGF_YERPY</name>
<organism>
    <name type="scientific">Yersinia pseudotuberculosis serotype O:3 (strain YPIII)</name>
    <dbReference type="NCBI Taxonomy" id="502800"/>
    <lineage>
        <taxon>Bacteria</taxon>
        <taxon>Pseudomonadati</taxon>
        <taxon>Pseudomonadota</taxon>
        <taxon>Gammaproteobacteria</taxon>
        <taxon>Enterobacterales</taxon>
        <taxon>Yersiniaceae</taxon>
        <taxon>Yersinia</taxon>
    </lineage>
</organism>
<proteinExistence type="inferred from homology"/>
<gene>
    <name evidence="1" type="primary">yqgF</name>
    <name type="ordered locus">YPK_0836</name>
</gene>
<feature type="chain" id="PRO_1000131092" description="Putative pre-16S rRNA nuclease">
    <location>
        <begin position="1"/>
        <end position="140"/>
    </location>
</feature>
<comment type="function">
    <text evidence="1">Could be a nuclease involved in processing of the 5'-end of pre-16S rRNA.</text>
</comment>
<comment type="subcellular location">
    <subcellularLocation>
        <location evidence="1">Cytoplasm</location>
    </subcellularLocation>
</comment>
<comment type="similarity">
    <text evidence="1">Belongs to the YqgF nuclease family.</text>
</comment>
<evidence type="ECO:0000255" key="1">
    <source>
        <dbReference type="HAMAP-Rule" id="MF_00651"/>
    </source>
</evidence>
<accession>B1JNP5</accession>